<organism>
    <name type="scientific">Bos taurus</name>
    <name type="common">Bovine</name>
    <dbReference type="NCBI Taxonomy" id="9913"/>
    <lineage>
        <taxon>Eukaryota</taxon>
        <taxon>Metazoa</taxon>
        <taxon>Chordata</taxon>
        <taxon>Craniata</taxon>
        <taxon>Vertebrata</taxon>
        <taxon>Euteleostomi</taxon>
        <taxon>Mammalia</taxon>
        <taxon>Eutheria</taxon>
        <taxon>Laurasiatheria</taxon>
        <taxon>Artiodactyla</taxon>
        <taxon>Ruminantia</taxon>
        <taxon>Pecora</taxon>
        <taxon>Bovidae</taxon>
        <taxon>Bovinae</taxon>
        <taxon>Bos</taxon>
    </lineage>
</organism>
<evidence type="ECO:0000250" key="1">
    <source>
        <dbReference type="UniProtKB" id="P13987"/>
    </source>
</evidence>
<evidence type="ECO:0000250" key="2">
    <source>
        <dbReference type="UniProtKB" id="Q8TDM5"/>
    </source>
</evidence>
<evidence type="ECO:0000255" key="3"/>
<evidence type="ECO:0000305" key="4"/>
<proteinExistence type="evidence at transcript level"/>
<protein>
    <recommendedName>
        <fullName>Sperm acrosome membrane-associated protein 4</fullName>
    </recommendedName>
</protein>
<feature type="signal peptide" evidence="3">
    <location>
        <begin position="1"/>
        <end position="19"/>
    </location>
</feature>
<feature type="chain" id="PRO_0000252448" description="Sperm acrosome membrane-associated protein 4">
    <location>
        <begin position="20"/>
        <end position="97"/>
    </location>
</feature>
<feature type="propeptide" id="PRO_0000252449" description="Removed in mature form" evidence="3">
    <location>
        <begin position="98"/>
        <end position="126"/>
    </location>
</feature>
<feature type="domain" description="UPAR/Ly6">
    <location>
        <begin position="23"/>
        <end position="97"/>
    </location>
</feature>
<feature type="lipid moiety-binding region" description="GPI-anchor amidated asparagine" evidence="3">
    <location>
        <position position="97"/>
    </location>
</feature>
<feature type="disulfide bond" evidence="1">
    <location>
        <begin position="23"/>
        <end position="47"/>
    </location>
</feature>
<feature type="disulfide bond" evidence="1">
    <location>
        <begin position="26"/>
        <end position="34"/>
    </location>
</feature>
<feature type="disulfide bond" evidence="1">
    <location>
        <begin position="41"/>
        <end position="65"/>
    </location>
</feature>
<feature type="disulfide bond" evidence="1">
    <location>
        <begin position="71"/>
        <end position="90"/>
    </location>
</feature>
<feature type="disulfide bond" evidence="1">
    <location>
        <begin position="91"/>
        <end position="96"/>
    </location>
</feature>
<accession>Q32PB3</accession>
<reference key="1">
    <citation type="submission" date="2005-10" db="EMBL/GenBank/DDBJ databases">
        <authorList>
            <consortium name="NIH - Mammalian Gene Collection (MGC) project"/>
        </authorList>
    </citation>
    <scope>NUCLEOTIDE SEQUENCE [LARGE SCALE MRNA]</scope>
    <source>
        <strain>Crossbred X Angus</strain>
        <tissue>Liver</tissue>
    </source>
</reference>
<dbReference type="EMBL" id="BC108186">
    <property type="protein sequence ID" value="AAI08187.1"/>
    <property type="molecule type" value="mRNA"/>
</dbReference>
<dbReference type="RefSeq" id="NP_001070491.1">
    <property type="nucleotide sequence ID" value="NM_001077023.2"/>
</dbReference>
<dbReference type="FunCoup" id="Q32PB3">
    <property type="interactions" value="92"/>
</dbReference>
<dbReference type="STRING" id="9913.ENSBTAP00000054329"/>
<dbReference type="PaxDb" id="9913-ENSBTAP00000054329"/>
<dbReference type="Ensembl" id="ENSBTAT00000063625.2">
    <property type="protein sequence ID" value="ENSBTAP00000054329.1"/>
    <property type="gene ID" value="ENSBTAG00000048127.2"/>
</dbReference>
<dbReference type="GeneID" id="767953"/>
<dbReference type="KEGG" id="bta:767953"/>
<dbReference type="CTD" id="171169"/>
<dbReference type="VEuPathDB" id="HostDB:ENSBTAG00000048127"/>
<dbReference type="VGNC" id="VGNC:35162">
    <property type="gene designation" value="SPACA4"/>
</dbReference>
<dbReference type="eggNOG" id="ENOG502S5P1">
    <property type="taxonomic scope" value="Eukaryota"/>
</dbReference>
<dbReference type="GeneTree" id="ENSGT00510000049347"/>
<dbReference type="HOGENOM" id="CLU_163755_0_0_1"/>
<dbReference type="InParanoid" id="Q32PB3"/>
<dbReference type="OMA" id="AKDCVFC"/>
<dbReference type="OrthoDB" id="5962859at2759"/>
<dbReference type="TreeFam" id="TF338445"/>
<dbReference type="Reactome" id="R-BTA-163125">
    <property type="pathway name" value="Post-translational modification: synthesis of GPI-anchored proteins"/>
</dbReference>
<dbReference type="Proteomes" id="UP000009136">
    <property type="component" value="Chromosome 18"/>
</dbReference>
<dbReference type="Bgee" id="ENSBTAG00000048127">
    <property type="expression patterns" value="Expressed in spermatid and 23 other cell types or tissues"/>
</dbReference>
<dbReference type="GO" id="GO:0002079">
    <property type="term" value="C:inner acrosomal membrane"/>
    <property type="evidence" value="ECO:0007669"/>
    <property type="project" value="UniProtKB-SubCell"/>
</dbReference>
<dbReference type="GO" id="GO:0016020">
    <property type="term" value="C:membrane"/>
    <property type="evidence" value="ECO:0000318"/>
    <property type="project" value="GO_Central"/>
</dbReference>
<dbReference type="GO" id="GO:0002081">
    <property type="term" value="C:outer acrosomal membrane"/>
    <property type="evidence" value="ECO:0007669"/>
    <property type="project" value="UniProtKB-SubCell"/>
</dbReference>
<dbReference type="GO" id="GO:0005886">
    <property type="term" value="C:plasma membrane"/>
    <property type="evidence" value="ECO:0007669"/>
    <property type="project" value="UniProtKB-SubCell"/>
</dbReference>
<dbReference type="GO" id="GO:0098552">
    <property type="term" value="C:side of membrane"/>
    <property type="evidence" value="ECO:0007669"/>
    <property type="project" value="UniProtKB-KW"/>
</dbReference>
<dbReference type="GO" id="GO:0007339">
    <property type="term" value="P:binding of sperm to zona pellucida"/>
    <property type="evidence" value="ECO:0007669"/>
    <property type="project" value="Ensembl"/>
</dbReference>
<dbReference type="GO" id="GO:0007155">
    <property type="term" value="P:cell adhesion"/>
    <property type="evidence" value="ECO:0007669"/>
    <property type="project" value="UniProtKB-KW"/>
</dbReference>
<dbReference type="GO" id="GO:0035036">
    <property type="term" value="P:sperm-egg recognition"/>
    <property type="evidence" value="ECO:0000318"/>
    <property type="project" value="GO_Central"/>
</dbReference>
<dbReference type="CDD" id="cd23574">
    <property type="entry name" value="TFP_LU_ECD_SPACA4"/>
    <property type="match status" value="1"/>
</dbReference>
<dbReference type="Gene3D" id="2.10.60.10">
    <property type="entry name" value="CD59"/>
    <property type="match status" value="1"/>
</dbReference>
<dbReference type="InterPro" id="IPR016054">
    <property type="entry name" value="LY6_UPA_recep-like"/>
</dbReference>
<dbReference type="InterPro" id="IPR045860">
    <property type="entry name" value="Snake_toxin-like_sf"/>
</dbReference>
<dbReference type="InterPro" id="IPR046354">
    <property type="entry name" value="SPACA4/Bouncer"/>
</dbReference>
<dbReference type="PANTHER" id="PTHR47613">
    <property type="entry name" value="SPERM ACROSOME MEMBRANE-ASSOCIATED PROTEIN 4"/>
    <property type="match status" value="1"/>
</dbReference>
<dbReference type="PANTHER" id="PTHR47613:SF1">
    <property type="entry name" value="SPERM ACROSOME MEMBRANE-ASSOCIATED PROTEIN 4"/>
    <property type="match status" value="1"/>
</dbReference>
<dbReference type="Pfam" id="PF00021">
    <property type="entry name" value="UPAR_LY6"/>
    <property type="match status" value="1"/>
</dbReference>
<dbReference type="SUPFAM" id="SSF57302">
    <property type="entry name" value="Snake toxin-like"/>
    <property type="match status" value="1"/>
</dbReference>
<sequence length="126" mass="12964">MVLGWLPLLVMVLAPGTTGVKDCVFCELTDSTSCPGTSMRCGDDEDCFTGHGVAPGVGPIINKGCVHATSCGHEEPINYMGVTYSLTTNCCTGHMCNGAPDPTRGRLAGAAASLALGVLLLLQHVL</sequence>
<keyword id="KW-0130">Cell adhesion</keyword>
<keyword id="KW-1003">Cell membrane</keyword>
<keyword id="KW-0968">Cytoplasmic vesicle</keyword>
<keyword id="KW-1015">Disulfide bond</keyword>
<keyword id="KW-0278">Fertilization</keyword>
<keyword id="KW-0325">Glycoprotein</keyword>
<keyword id="KW-0336">GPI-anchor</keyword>
<keyword id="KW-0449">Lipoprotein</keyword>
<keyword id="KW-0472">Membrane</keyword>
<keyword id="KW-1185">Reference proteome</keyword>
<keyword id="KW-0732">Signal</keyword>
<comment type="function">
    <text evidence="2">Sperm surface membrane protein that is essential for effective sperm-zona pellucida binding and penetration during fertilization.</text>
</comment>
<comment type="subcellular location">
    <subcellularLocation>
        <location evidence="2">Cell membrane</location>
        <topology evidence="2">Lipid-anchor</topology>
        <topology evidence="2">GPI-anchor</topology>
    </subcellularLocation>
    <subcellularLocation>
        <location evidence="2">Cytoplasmic vesicle</location>
        <location evidence="2">Secretory vesicle</location>
        <location evidence="2">Acrosome</location>
    </subcellularLocation>
    <subcellularLocation>
        <location evidence="2">Cytoplasmic vesicle</location>
        <location evidence="2">Secretory vesicle</location>
        <location evidence="2">Acrosome inner membrane</location>
    </subcellularLocation>
    <subcellularLocation>
        <location evidence="2">Cytoplasmic vesicle</location>
        <location evidence="2">Secretory vesicle</location>
        <location evidence="2">Acrosome outer membrane</location>
    </subcellularLocation>
    <text evidence="2">Expressed in acrosomal matrix.</text>
</comment>
<comment type="similarity">
    <text evidence="4">Belongs to the SPACA4/bouncer family.</text>
</comment>
<name>SACA4_BOVIN</name>
<gene>
    <name type="primary">SPACA4</name>
</gene>